<dbReference type="EMBL" id="AP006861">
    <property type="protein sequence ID" value="BAE81059.1"/>
    <property type="molecule type" value="Genomic_DNA"/>
</dbReference>
<dbReference type="RefSeq" id="WP_011457840.1">
    <property type="nucleotide sequence ID" value="NC_007899.1"/>
</dbReference>
<dbReference type="STRING" id="264202.gene:10544100"/>
<dbReference type="KEGG" id="cfe:BAE81059.1"/>
<dbReference type="eggNOG" id="COG3659">
    <property type="taxonomic scope" value="Bacteria"/>
</dbReference>
<dbReference type="HOGENOM" id="CLU_619231_0_0_0"/>
<dbReference type="OrthoDB" id="18651at2"/>
<dbReference type="Proteomes" id="UP000001260">
    <property type="component" value="Chromosome"/>
</dbReference>
<dbReference type="GO" id="GO:0009279">
    <property type="term" value="C:cell outer membrane"/>
    <property type="evidence" value="ECO:0007669"/>
    <property type="project" value="UniProtKB-SubCell"/>
</dbReference>
<dbReference type="GO" id="GO:0046930">
    <property type="term" value="C:pore complex"/>
    <property type="evidence" value="ECO:0007669"/>
    <property type="project" value="UniProtKB-KW"/>
</dbReference>
<dbReference type="GO" id="GO:0015288">
    <property type="term" value="F:porin activity"/>
    <property type="evidence" value="ECO:0007669"/>
    <property type="project" value="UniProtKB-KW"/>
</dbReference>
<dbReference type="GO" id="GO:0006865">
    <property type="term" value="P:amino acid transport"/>
    <property type="evidence" value="ECO:0007669"/>
    <property type="project" value="UniProtKB-KW"/>
</dbReference>
<dbReference type="GO" id="GO:0008643">
    <property type="term" value="P:carbohydrate transport"/>
    <property type="evidence" value="ECO:0007669"/>
    <property type="project" value="InterPro"/>
</dbReference>
<dbReference type="GO" id="GO:0006811">
    <property type="term" value="P:monoatomic ion transport"/>
    <property type="evidence" value="ECO:0007669"/>
    <property type="project" value="UniProtKB-KW"/>
</dbReference>
<dbReference type="Gene3D" id="2.40.160.180">
    <property type="entry name" value="Carbohydrate-selective porin OprB"/>
    <property type="match status" value="1"/>
</dbReference>
<dbReference type="InterPro" id="IPR007049">
    <property type="entry name" value="Carb-sel_porin_OprB"/>
</dbReference>
<dbReference type="InterPro" id="IPR038673">
    <property type="entry name" value="OprB_sf"/>
</dbReference>
<dbReference type="Pfam" id="PF04966">
    <property type="entry name" value="OprB"/>
    <property type="match status" value="1"/>
</dbReference>
<organism>
    <name type="scientific">Chlamydia felis (strain Fe/C-56)</name>
    <name type="common">Chlamydophila felis</name>
    <dbReference type="NCBI Taxonomy" id="264202"/>
    <lineage>
        <taxon>Bacteria</taxon>
        <taxon>Pseudomonadati</taxon>
        <taxon>Chlamydiota</taxon>
        <taxon>Chlamydiia</taxon>
        <taxon>Chlamydiales</taxon>
        <taxon>Chlamydiaceae</taxon>
        <taxon>Chlamydia/Chlamydophila group</taxon>
        <taxon>Chlamydia</taxon>
    </lineage>
</organism>
<name>AAXA_CHLFF</name>
<protein>
    <recommendedName>
        <fullName>Porin AaxA</fullName>
    </recommendedName>
    <alternativeName>
        <fullName>Outer membrane protein AaxA</fullName>
    </alternativeName>
</protein>
<gene>
    <name type="primary">aaxA</name>
    <name type="ordered locus">CF0287</name>
</gene>
<reference key="1">
    <citation type="journal article" date="2006" name="DNA Res.">
        <title>Genome sequence of the cat pathogen, Chlamydophila felis.</title>
        <authorList>
            <person name="Azuma Y."/>
            <person name="Hirakawa H."/>
            <person name="Yamashita A."/>
            <person name="Cai Y."/>
            <person name="Rahman M.A."/>
            <person name="Suzuki H."/>
            <person name="Mitaku S."/>
            <person name="Toh H."/>
            <person name="Goto S."/>
            <person name="Murakami T."/>
            <person name="Sugi K."/>
            <person name="Hayashi H."/>
            <person name="Fukushi H."/>
            <person name="Hattori M."/>
            <person name="Kuhara S."/>
            <person name="Shirai M."/>
        </authorList>
    </citation>
    <scope>NUCLEOTIDE SEQUENCE [LARGE SCALE GENOMIC DNA]</scope>
    <source>
        <strain>Fe/C-56</strain>
    </source>
</reference>
<comment type="function">
    <text evidence="1">Facilitates L-arginine uptake, as part of the AaxABC system. The arginine uptake by the bacterium in the macrophage may be a virulence factor against the host innate immune response (By similarity).</text>
</comment>
<comment type="subcellular location">
    <subcellularLocation>
        <location evidence="1">Cell outer membrane</location>
        <topology evidence="1">Multi-pass membrane protein</topology>
    </subcellularLocation>
</comment>
<comment type="similarity">
    <text evidence="4">Belongs to the OprB family.</text>
</comment>
<keyword id="KW-0029">Amino-acid transport</keyword>
<keyword id="KW-0998">Cell outer membrane</keyword>
<keyword id="KW-0406">Ion transport</keyword>
<keyword id="KW-0472">Membrane</keyword>
<keyword id="KW-0626">Porin</keyword>
<keyword id="KW-0732">Signal</keyword>
<keyword id="KW-0812">Transmembrane</keyword>
<keyword id="KW-1134">Transmembrane beta strand</keyword>
<keyword id="KW-0813">Transport</keyword>
<keyword id="KW-0843">Virulence</keyword>
<feature type="signal peptide" evidence="2">
    <location>
        <begin position="1"/>
        <end position="19"/>
    </location>
</feature>
<feature type="chain" id="PRO_0000363180" description="Porin AaxA">
    <location>
        <begin position="20"/>
        <end position="444"/>
    </location>
</feature>
<feature type="region of interest" description="Disordered" evidence="3">
    <location>
        <begin position="42"/>
        <end position="68"/>
    </location>
</feature>
<feature type="compositionally biased region" description="Low complexity" evidence="3">
    <location>
        <begin position="46"/>
        <end position="56"/>
    </location>
</feature>
<accession>Q255H9</accession>
<evidence type="ECO:0000250" key="1"/>
<evidence type="ECO:0000255" key="2"/>
<evidence type="ECO:0000256" key="3">
    <source>
        <dbReference type="SAM" id="MobiDB-lite"/>
    </source>
</evidence>
<evidence type="ECO:0000305" key="4"/>
<sequence length="444" mass="49332">MAFSRFYLLTALYTGGILASSAYGIPSNYPEHHHRLIERLKKNSTQDSDSSPSESSPHPRQEPRRHVLTPVHNVLKDRPCDEGLSISKLLHSIEKETNSQISVDFTILPQWFYPKKAALATVDEKQPTWQFYISPNVSWQLYNSPTAGVGSIDFSYTLIRYWRNSAQNANNAAGIAGGINDYSSRTNTLSQLTFSQTFPGDILTVAMGQYSLYSIDGTLYDNDQQSGFISYALSQNASATYSLGSVGAYVQFTPTPSINIQAGFQDAYNIVGTSFDVYNLTKNKYNFYGYFSWAPQCKLGNGQYSALIYSTRKVPQQPTQTTGWSLNFGQHLGEKLYVFGRWNGATGTAINLNRSYVLGLASANPINRNSQDLLGAACSISKVNPKVVTEKRIRKYETVIETFATIGFGPHISLTPDLQIYIHPALRPDKRSAKVYGVRANFSA</sequence>
<proteinExistence type="inferred from homology"/>